<comment type="function">
    <text evidence="1">The surface protein gp120 (SU) attaches the virus to the host lymphoid cell by binding to the primary receptor CD4. This interaction induces a structural rearrangement creating a high affinity binding site for a chemokine coreceptor like CXCR4 and/or CCR5. This peculiar 2 stage receptor-interaction strategy allows gp120 to maintain the highly conserved coreceptor-binding site in a cryptic conformation, protected from neutralizing antibodies. Since CD4 also displays a binding site for the disulfide-isomerase P4HB/PDI, a P4HB/PDI-CD4-CXCR4-gp120 complex may form. In that complex, P4HB/PDI could reach and reduce gp120 disulfide bonds, causing major conformational changes in gp120. TXN, another PDI family member could also be involved in disulfide rearrangements in Env during fusion. These changes are transmitted to the transmembrane protein gp41 and are thought to activate its fusogenic potential by unmasking its fusion peptide (By similarity).</text>
</comment>
<comment type="function">
    <text evidence="1">The surface protein gp120 is a ligand for CD209/DC-SIGN and CLEC4M/DC-SIGNR, which are respectively found on dendritic cells (DCs), and on endothelial cells of liver sinusoids and lymph node sinuses. These interactions allow capture of viral particles at mucosal surfaces by these cells and subsequent transmission to permissive cells. DCs are professional antigen presenting cells, critical for host immunity by inducing specific immune responses against a broad variety of pathogens. They act as sentinels in various tissues where they take up antigen, process it, and present it to T-cells following migration to lymphoid organs. HIV subverts the migration properties of dendritic cells to gain access to CD4+ T-cells in lymph nodes. Virus transmission to permissive T-cells occurs either in trans (without DCs infection, through viral capture and transmission), or in cis (following DCs productive infection, through the usual CD4-gp120 interaction), thereby inducing a robust infection. In trans infection, bound virions remain infectious over days and it is proposed that they are not degraded, but protected in non-lysosomal acidic organelles within the DCs close to the cell membrane thus contributing to the viral infectious potential during DCs' migration from the periphery to the lymphoid tissues. On arrival at lymphoid tissues, intact virions recycle back to DCs' cell surface allowing virus transmission to CD4+ T-cells. Virion capture also seems to lead to MHC-II-restricted viral antigen presentation, and probably to the activation of HIV-specific CD4+ cells (By similarity).</text>
</comment>
<comment type="function">
    <text evidence="1">The transmembrane protein gp41 (TM) acts as a class I viral fusion protein. Under the current model, the protein has at least 3 conformational states: pre-fusion native state, pre-hairpin intermediate state, and post-fusion hairpin state. During fusion of viral and target intracellular membranes, the coiled coil regions (heptad repeats) assume a trimer-of-hairpins structure, positioning the fusion peptide in close proximity to the C-terminal region of the ectodomain. The formation of this structure appears to drive apposition and subsequent fusion of viral and target cell membranes. Complete fusion occurs in host cell endosomes and is dynamin-dependent, however some lipid transfer might occur at the plasma membrane. The virus undergoes clathrin-dependent internalization long before endosomal fusion, thus minimizing the surface exposure of conserved viral epitopes during fusion and reducing the efficacy of inhibitors targeting these epitopes. Membranes fusion leads to delivery of the nucleocapsid into the cytoplasm (By similarity).</text>
</comment>
<comment type="function">
    <text evidence="1">The envelope glycoprotein gp160 precursor down-modulates cell surface CD4 antigen by interacting with it in the endoplasmic reticulum and blocking its transport to the cell surface.</text>
</comment>
<comment type="function">
    <text evidence="1">The gp120-gp41 heterodimer seems to contribute to T-cell depletion during HIV-1 infection. The envelope glycoproteins expressed on the surface of infected cells induce apoptosis through an interaction with uninfected cells expressing the receptor (CD4) and the coreceptors CXCR4 or CCR5. This type of bystander killing may be obtained by at least three distinct mechanisms. First, the interaction between the 2 cells can induce cellular fusion followed by nuclear fusion within the syncytium. Syncytia are condemned to die from apoptosis. Second, the 2 interacting cells may not fuse entirely and simply exchange plasma membrane lipids, after a sort of hemifusion process, followed by rapid death. Third, it is possible that virus-infected cells, on the point of undergoing apoptosis, fuse with CD4-expressing cells, in which case apoptosis is rapidly transmitted from one cell to the other and thus occurs in a sort of contagious fashion (By similarity).</text>
</comment>
<comment type="function">
    <text evidence="1">The gp120-gp41 heterodimer allows rapid transcytosis of the virus through CD4 negative cells such as simple epithelial monolayers of the intestinal, rectal and endocervical epithelial barriers. Both gp120 and gp41 specifically recognize glycosphingolipids galactosyl-ceramide (GalCer) or 3' sulfo-galactosyl-ceramide (GalS) present in the lipid rafts structures of epithelial cells. Binding to these alternative receptors allows the rapid transcytosis of the virus through the epithelial cells. This transcytotic vesicle-mediated transport of virions from the apical side to the basolateral side of the epithelial cells does not involve infection of the cells themselves (By similarity).</text>
</comment>
<comment type="subunit">
    <molecule>Surface protein gp120</molecule>
    <text evidence="1">The mature envelope protein (Env) consists of a homotrimer of non-covalently associated gp120-gp41 heterodimers. The resulting complex protrudes from the virus surface as a spike. There seems to be as few as 10 spikes on the average virion. Interacts with human CD4, CCR5 and CXCR4, to form a P4HB/PDI-CD4-CXCR4-gp120 complex. Gp120 also interacts with the C-type lectins CD209/DC-SIGN and CLEC4M/DC-SIGNR (collectively referred to as DC-SIGN(R)). Gp120 and gp41 interact with GalCer (By similarity).</text>
</comment>
<comment type="subunit">
    <molecule>Transmembrane protein gp41</molecule>
    <text evidence="1">The mature envelope protein (Env) consists of a homotrimer of non-covalently associated gp120-gp41 heterodimers. The resulting complex protrudes from the virus surface as a spike. There seems to be as few as 10 spikes on the average virion.</text>
</comment>
<comment type="subcellular location">
    <molecule>Transmembrane protein gp41</molecule>
    <subcellularLocation>
        <location evidence="1">Virion membrane</location>
        <topology evidence="1">Single-pass type I membrane protein</topology>
    </subcellularLocation>
    <subcellularLocation>
        <location evidence="1">Host cell membrane</location>
        <topology evidence="1">Single-pass type I membrane protein</topology>
    </subcellularLocation>
    <subcellularLocation>
        <location evidence="4">Host endosome membrane</location>
        <topology evidence="4">Single-pass type I membrane protein</topology>
    </subcellularLocation>
    <text evidence="1">It is probably concentrated at the site of budding and incorporated into the virions possibly by contacts between the cytoplasmic tail of Env and the N-terminus of Gag.</text>
</comment>
<comment type="subcellular location">
    <molecule>Surface protein gp120</molecule>
    <subcellularLocation>
        <location evidence="1">Virion membrane</location>
        <topology evidence="1">Peripheral membrane protein</topology>
    </subcellularLocation>
    <subcellularLocation>
        <location evidence="1">Host cell membrane</location>
        <topology evidence="1">Peripheral membrane protein</topology>
    </subcellularLocation>
    <subcellularLocation>
        <location evidence="4">Host endosome membrane</location>
        <topology evidence="4">Peripheral membrane protein</topology>
    </subcellularLocation>
    <text evidence="1">The surface protein is not anchored to the viral envelope, but associates with the extravirion surface through its binding to TM. It is probably concentrated at the site of budding and incorporated into the virions possibly by contacts between the cytoplasmic tail of Env and the N-terminus of Gag (By similarity).</text>
</comment>
<comment type="domain">
    <text evidence="1">Some of the most genetically diverse regions of the viral genome are present in Env. They are called variable regions 1 through 5 (V1 through V5). Coreceptor usage of gp120 is determined mainly by the primary structure of the third variable region (V3) in the outer domain of gp120. Binding to CCR5 involves a region adjacent in addition to V3 (By similarity).</text>
</comment>
<comment type="domain">
    <text evidence="1">The 17 amino acids long immunosuppressive region is present in many retroviral envelope proteins. Synthetic peptides derived from this relatively conserved sequence inhibit immune function in vitro and in vivo (By similarity).</text>
</comment>
<comment type="PTM">
    <text evidence="1">Specific enzymatic cleavages in vivo yield mature proteins. Envelope glycoproteins are synthesized as an inactive precursor that is heavily N-glycosylated and processed likely by host cell furin in the Golgi to yield the mature SU and TM proteins. The cleavage site between SU and TM requires the minimal sequence [KR]-X-[KR]-R (By similarity).</text>
</comment>
<comment type="PTM">
    <text evidence="1">Palmitoylation of the transmembrane protein and of Env polyprotein (prior to its proteolytic cleavage) is essential for their association with host cell membrane lipid rafts. Palmitoylation is therefore required for envelope trafficking to classical lipid rafts, but not for viral replication (By similarity).</text>
</comment>
<comment type="miscellaneous">
    <text>Some HIV-2 isolates have been described that can infect cells independently of CD4, using CXCR4 as primary receptor. These isolates may have an exposed coreceptor binding site.</text>
</comment>
<accession>Q89607</accession>
<gene>
    <name type="primary">env</name>
</gene>
<keyword id="KW-0014">AIDS</keyword>
<keyword id="KW-0053">Apoptosis</keyword>
<keyword id="KW-1165">Clathrin-mediated endocytosis of virus by host</keyword>
<keyword id="KW-0165">Cleavage on pair of basic residues</keyword>
<keyword id="KW-0175">Coiled coil</keyword>
<keyword id="KW-1015">Disulfide bond</keyword>
<keyword id="KW-1170">Fusion of virus membrane with host endosomal membrane</keyword>
<keyword id="KW-1168">Fusion of virus membrane with host membrane</keyword>
<keyword id="KW-0325">Glycoprotein</keyword>
<keyword id="KW-1032">Host cell membrane</keyword>
<keyword id="KW-1039">Host endosome</keyword>
<keyword id="KW-1043">Host membrane</keyword>
<keyword id="KW-0945">Host-virus interaction</keyword>
<keyword id="KW-1090">Inhibition of host innate immune response by virus</keyword>
<keyword id="KW-1084">Inhibition of host tetherin by virus</keyword>
<keyword id="KW-0449">Lipoprotein</keyword>
<keyword id="KW-0472">Membrane</keyword>
<keyword id="KW-0564">Palmitate</keyword>
<keyword id="KW-0732">Signal</keyword>
<keyword id="KW-0812">Transmembrane</keyword>
<keyword id="KW-1133">Transmembrane helix</keyword>
<keyword id="KW-1161">Viral attachment to host cell</keyword>
<keyword id="KW-0261">Viral envelope protein</keyword>
<keyword id="KW-0899">Viral immunoevasion</keyword>
<keyword id="KW-1162">Viral penetration into host cytoplasm</keyword>
<keyword id="KW-0946">Virion</keyword>
<keyword id="KW-1164">Virus endocytosis by host</keyword>
<keyword id="KW-1160">Virus entry into host cell</keyword>
<reference key="1">
    <citation type="journal article" date="1994" name="Virology">
        <title>HIV-2 EHO isolate has a divergent envelope gene and induces single cell killing by apoptosis.</title>
        <authorList>
            <person name="Rey-Cuille M.A."/>
            <person name="Galabru J."/>
            <person name="Laurent-Crawford A."/>
            <person name="Krust B."/>
            <person name="Montagnier L."/>
            <person name="Hovanessian A.G."/>
        </authorList>
    </citation>
    <scope>NUCLEOTIDE SEQUENCE [GENOMIC DNA]</scope>
</reference>
<reference key="2">
    <citation type="journal article" date="1995" name="AIDS Res. Hum. Retroviruses">
        <title>Nucleotide sequence of the HIV-2 EHO genome, a divergent HIV-2 isolate.</title>
        <authorList>
            <person name="Galabru J."/>
            <person name="Rey-Cuille M.A."/>
            <person name="Hovanessian A.G."/>
        </authorList>
    </citation>
    <scope>NUCLEOTIDE SEQUENCE [GENOMIC DNA]</scope>
</reference>
<reference key="3">
    <citation type="journal article" date="2002" name="J. Gen. Virol.">
        <title>Human immunodeficiency virus type 2.</title>
        <authorList>
            <person name="Reeves J.D."/>
            <person name="Doms R.W."/>
        </authorList>
    </citation>
    <scope>REVIEW</scope>
</reference>
<dbReference type="EMBL" id="U27200">
    <property type="protein sequence ID" value="AAC54473.1"/>
    <property type="molecule type" value="Genomic_DNA"/>
</dbReference>
<dbReference type="SMR" id="Q89607"/>
<dbReference type="GlyCosmos" id="Q89607">
    <property type="glycosylation" value="22 sites, No reported glycans"/>
</dbReference>
<dbReference type="Proteomes" id="UP000007423">
    <property type="component" value="Segment"/>
</dbReference>
<dbReference type="GO" id="GO:0044175">
    <property type="term" value="C:host cell endosome membrane"/>
    <property type="evidence" value="ECO:0007669"/>
    <property type="project" value="UniProtKB-SubCell"/>
</dbReference>
<dbReference type="GO" id="GO:0020002">
    <property type="term" value="C:host cell plasma membrane"/>
    <property type="evidence" value="ECO:0007669"/>
    <property type="project" value="UniProtKB-SubCell"/>
</dbReference>
<dbReference type="GO" id="GO:0016020">
    <property type="term" value="C:membrane"/>
    <property type="evidence" value="ECO:0007669"/>
    <property type="project" value="UniProtKB-KW"/>
</dbReference>
<dbReference type="GO" id="GO:0019031">
    <property type="term" value="C:viral envelope"/>
    <property type="evidence" value="ECO:0007669"/>
    <property type="project" value="UniProtKB-KW"/>
</dbReference>
<dbReference type="GO" id="GO:0055036">
    <property type="term" value="C:virion membrane"/>
    <property type="evidence" value="ECO:0007669"/>
    <property type="project" value="UniProtKB-SubCell"/>
</dbReference>
<dbReference type="GO" id="GO:0005198">
    <property type="term" value="F:structural molecule activity"/>
    <property type="evidence" value="ECO:0007669"/>
    <property type="project" value="InterPro"/>
</dbReference>
<dbReference type="GO" id="GO:0075512">
    <property type="term" value="P:clathrin-dependent endocytosis of virus by host cell"/>
    <property type="evidence" value="ECO:0007669"/>
    <property type="project" value="UniProtKB-KW"/>
</dbReference>
<dbReference type="GO" id="GO:0039654">
    <property type="term" value="P:fusion of virus membrane with host endosome membrane"/>
    <property type="evidence" value="ECO:0007669"/>
    <property type="project" value="UniProtKB-KW"/>
</dbReference>
<dbReference type="GO" id="GO:0052170">
    <property type="term" value="P:symbiont-mediated suppression of host innate immune response"/>
    <property type="evidence" value="ECO:0007669"/>
    <property type="project" value="UniProtKB-KW"/>
</dbReference>
<dbReference type="GO" id="GO:0039587">
    <property type="term" value="P:symbiont-mediated-mediated suppression of host tetherin activity"/>
    <property type="evidence" value="ECO:0007669"/>
    <property type="project" value="UniProtKB-KW"/>
</dbReference>
<dbReference type="GO" id="GO:0019062">
    <property type="term" value="P:virion attachment to host cell"/>
    <property type="evidence" value="ECO:0007669"/>
    <property type="project" value="UniProtKB-KW"/>
</dbReference>
<dbReference type="CDD" id="cd09909">
    <property type="entry name" value="HIV-1-like_HR1-HR2"/>
    <property type="match status" value="1"/>
</dbReference>
<dbReference type="Gene3D" id="1.10.287.210">
    <property type="match status" value="1"/>
</dbReference>
<dbReference type="Gene3D" id="2.170.40.20">
    <property type="entry name" value="Human immunodeficiency virus 1, Gp160, envelope glycoprotein"/>
    <property type="match status" value="2"/>
</dbReference>
<dbReference type="InterPro" id="IPR036377">
    <property type="entry name" value="Gp120_core_sf"/>
</dbReference>
<dbReference type="InterPro" id="IPR000328">
    <property type="entry name" value="GP41-like"/>
</dbReference>
<dbReference type="InterPro" id="IPR000777">
    <property type="entry name" value="HIV1_Gp120"/>
</dbReference>
<dbReference type="Pfam" id="PF00516">
    <property type="entry name" value="GP120"/>
    <property type="match status" value="1"/>
</dbReference>
<dbReference type="Pfam" id="PF00517">
    <property type="entry name" value="GP41"/>
    <property type="match status" value="1"/>
</dbReference>
<dbReference type="SUPFAM" id="SSF56502">
    <property type="entry name" value="gp120 core"/>
    <property type="match status" value="1"/>
</dbReference>
<dbReference type="SUPFAM" id="SSF58069">
    <property type="entry name" value="Virus ectodomain"/>
    <property type="match status" value="1"/>
</dbReference>
<feature type="signal peptide" evidence="2">
    <location>
        <begin position="1"/>
        <end position="24"/>
    </location>
</feature>
<feature type="chain" id="PRO_0000244702" description="Envelope glycoprotein gp160" evidence="1">
    <location>
        <begin position="25"/>
        <end position="852"/>
    </location>
</feature>
<feature type="chain" id="PRO_0000244703" description="Surface protein gp120" evidence="1">
    <location>
        <begin position="25"/>
        <end position="509"/>
    </location>
</feature>
<feature type="chain" id="PRO_0000244704" description="Transmembrane protein gp41" evidence="1">
    <location>
        <begin position="510"/>
        <end position="852"/>
    </location>
</feature>
<feature type="topological domain" description="Extracellular" evidence="2">
    <location>
        <begin position="25"/>
        <end position="677"/>
    </location>
</feature>
<feature type="transmembrane region" description="Helical" evidence="2">
    <location>
        <begin position="678"/>
        <end position="698"/>
    </location>
</feature>
<feature type="topological domain" description="Cytoplasmic" evidence="2">
    <location>
        <begin position="699"/>
        <end position="852"/>
    </location>
</feature>
<feature type="region of interest" description="V1">
    <location>
        <begin position="113"/>
        <end position="161"/>
    </location>
</feature>
<feature type="region of interest" description="V2">
    <location>
        <begin position="162"/>
        <end position="204"/>
    </location>
</feature>
<feature type="region of interest" description="V3">
    <location>
        <begin position="303"/>
        <end position="335"/>
    </location>
</feature>
<feature type="region of interest" description="V4">
    <location>
        <begin position="395"/>
        <end position="417"/>
    </location>
</feature>
<feature type="region of interest" description="V5">
    <location>
        <begin position="461"/>
        <end position="467"/>
    </location>
</feature>
<feature type="region of interest" description="Fusion peptide" evidence="2">
    <location>
        <begin position="510"/>
        <end position="530"/>
    </location>
</feature>
<feature type="region of interest" description="Immunosuppression" evidence="1">
    <location>
        <begin position="573"/>
        <end position="589"/>
    </location>
</feature>
<feature type="region of interest" description="MPER; binding to GalCer" evidence="1">
    <location>
        <begin position="655"/>
        <end position="676"/>
    </location>
</feature>
<feature type="region of interest" description="Disordered" evidence="3">
    <location>
        <begin position="713"/>
        <end position="740"/>
    </location>
</feature>
<feature type="coiled-coil region" evidence="2">
    <location>
        <begin position="622"/>
        <end position="648"/>
    </location>
</feature>
<feature type="short sequence motif" description="YXXV motif; contains endocytosis signal" evidence="1">
    <location>
        <begin position="705"/>
        <end position="708"/>
    </location>
</feature>
<feature type="short sequence motif" description="Di-leucine internalization motif" evidence="1">
    <location>
        <begin position="851"/>
        <end position="852"/>
    </location>
</feature>
<feature type="site" description="Cleavage; by host furin" evidence="1">
    <location>
        <begin position="509"/>
        <end position="510"/>
    </location>
</feature>
<feature type="lipid moiety-binding region" description="S-palmitoyl cysteine; by host" evidence="1">
    <location>
        <position position="771"/>
    </location>
</feature>
<feature type="glycosylation site" description="N-linked (GlcNAc...) asparagine; by host" evidence="2">
    <location>
        <position position="37"/>
    </location>
</feature>
<feature type="glycosylation site" description="N-linked (GlcNAc...) asparagine; by host" evidence="2">
    <location>
        <position position="70"/>
    </location>
</feature>
<feature type="glycosylation site" description="N-linked (GlcNAc...) asparagine; by host" evidence="2">
    <location>
        <position position="114"/>
    </location>
</feature>
<feature type="glycosylation site" description="N-linked (GlcNAc...) asparagine; by host" evidence="2">
    <location>
        <position position="148"/>
    </location>
</feature>
<feature type="glycosylation site" description="N-linked (GlcNAc...) asparagine; by host" evidence="2">
    <location>
        <position position="195"/>
    </location>
</feature>
<feature type="glycosylation site" description="N-linked (GlcNAc...) asparagine; by host" evidence="2">
    <location>
        <position position="205"/>
    </location>
</feature>
<feature type="glycosylation site" description="N-linked (GlcNAc...) asparagine; by host" evidence="2">
    <location>
        <position position="237"/>
    </location>
</feature>
<feature type="glycosylation site" description="N-linked (GlcNAc...) asparagine; by host" evidence="2">
    <location>
        <position position="247"/>
    </location>
</feature>
<feature type="glycosylation site" description="N-linked (GlcNAc...) asparagine; by host" evidence="2">
    <location>
        <position position="270"/>
    </location>
</feature>
<feature type="glycosylation site" description="N-linked (GlcNAc...) asparagine; by host" evidence="2">
    <location>
        <position position="276"/>
    </location>
</feature>
<feature type="glycosylation site" description="N-linked (GlcNAc...) asparagine; by host" evidence="2">
    <location>
        <position position="287"/>
    </location>
</feature>
<feature type="glycosylation site" description="N-linked (GlcNAc...) asparagine; by host" evidence="2">
    <location>
        <position position="298"/>
    </location>
</feature>
<feature type="glycosylation site" description="N-linked (GlcNAc...) asparagine; by host" evidence="2">
    <location>
        <position position="341"/>
    </location>
</feature>
<feature type="glycosylation site" description="N-linked (GlcNAc...) asparagine; by host" evidence="2">
    <location>
        <position position="364"/>
    </location>
</feature>
<feature type="glycosylation site" description="N-linked (GlcNAc...) asparagine; by host" evidence="2">
    <location>
        <position position="396"/>
    </location>
</feature>
<feature type="glycosylation site" description="N-linked (GlcNAc...) asparagine; by host" evidence="2">
    <location>
        <position position="406"/>
    </location>
</feature>
<feature type="glycosylation site" description="N-linked (GlcNAc...) asparagine; by host" evidence="2">
    <location>
        <position position="445"/>
    </location>
</feature>
<feature type="glycosylation site" description="N-linked (GlcNAc...) asparagine; by host" evidence="2">
    <location>
        <position position="461"/>
    </location>
</feature>
<feature type="glycosylation site" description="N-linked (GlcNAc...) asparagine; by host" evidence="2">
    <location>
        <position position="464"/>
    </location>
</feature>
<feature type="glycosylation site" description="N-linked (GlcNAc...) asparagine; by host" evidence="2">
    <location>
        <position position="609"/>
    </location>
</feature>
<feature type="glycosylation site" description="N-linked (GlcNAc...) asparagine; by host" evidence="2">
    <location>
        <position position="618"/>
    </location>
</feature>
<feature type="glycosylation site" description="N-linked (GlcNAc...) asparagine; by host" evidence="2">
    <location>
        <position position="634"/>
    </location>
</feature>
<feature type="disulfide bond" evidence="1">
    <location>
        <begin position="44"/>
        <end position="57"/>
    </location>
</feature>
<feature type="disulfide bond" evidence="1">
    <location>
        <begin position="101"/>
        <end position="213"/>
    </location>
</feature>
<feature type="disulfide bond" evidence="1">
    <location>
        <begin position="108"/>
        <end position="204"/>
    </location>
</feature>
<feature type="disulfide bond" evidence="1">
    <location>
        <begin position="113"/>
        <end position="162"/>
    </location>
</feature>
<feature type="disulfide bond" evidence="1">
    <location>
        <begin position="236"/>
        <end position="248"/>
    </location>
</feature>
<feature type="disulfide bond" evidence="1">
    <location>
        <begin position="303"/>
        <end position="336"/>
    </location>
</feature>
<feature type="disulfide bond" evidence="1">
    <location>
        <begin position="388"/>
        <end position="444"/>
    </location>
</feature>
<feature type="disulfide bond" evidence="1">
    <location>
        <begin position="395"/>
        <end position="417"/>
    </location>
</feature>
<protein>
    <recommendedName>
        <fullName>Envelope glycoprotein gp160</fullName>
    </recommendedName>
    <alternativeName>
        <fullName>Env polyprotein</fullName>
    </alternativeName>
    <component>
        <recommendedName>
            <fullName>Surface protein gp120</fullName>
            <shortName>SU</shortName>
        </recommendedName>
        <alternativeName>
            <fullName>Glycoprotein 120</fullName>
            <shortName>gp120</shortName>
        </alternativeName>
    </component>
    <component>
        <recommendedName>
            <fullName>Transmembrane protein gp41</fullName>
            <shortName>TM</shortName>
        </recommendedName>
        <alternativeName>
            <fullName>Glycoprotein 41</fullName>
            <shortName>gp41</shortName>
        </alternativeName>
    </component>
</protein>
<sequence length="852" mass="98061">MAHVNNYLLVTLLLISIYGYMGKNFVTVFYGIPAWKNASIPLFCATRNRDTWGTVQCLPDNDDYTEIQLNITEAFDAWDNTVTDQATKDVWSLFETSIKPCVKLTPLCVTMKCNKTWSSASKETTTSSASLRSSTQTLLNEDSKCIQNDSCAGIGLEEMIDCQFKMTGLKRDESKQYKDTWYKQDLVCEKGTRSNESKCYIKTCNTSIIQESCDKHYWDSLRFRYCAPPGFALLRCNDTKYSGFMPNCSKVVVSLYRMMETQTSTWFGFNGTRAENRTYIYWHGKDNRTIISLNSYYNLTMHCKRPGNKMVVPIRTVSGILFHSQPINKRPKQAWCWFKGNWTEAIQEVKETIKNHPRYSGTTNISQIRLAEHARSSDPEVRYMWTNCRGEFLYCNMTFFLNWVENRTGLKRNYASCHIRQIVNTWHKIGRNVYLPPREGELSCNSTVTSLIANIDWIDKNLTNITVSAEVSELYKLELGDYKLVEITPIGFAPTSIKRYSSVTPRNKRGVLVLGFLGFLATAGSAMGAASLTLSAQSRTLLAGIVQQQQQLVDVVKRQQELLRLTVWGTKNLQARVTAIEKYLKDQAQLNSWGCAFRQVCHTTVPWVNESLKPDWNNMTWQQWERQVRFLDANITKLLEEAQIQQEKNMYELQKLNQWDIFSNWFDFTSWMAYIRLGLYIVIGIVVLRIAIYIIQMLARLRKGYRPVFSSPPSYTQQIPIRKDRGQPANEETEEGGGNNEGYRSWPWQIEYIHFPIRQLRDLLIWLYSGCRTLLSKTFQTLQPVLQPLRLPPAYLRYGISWFQEAIQAAARAAGETLASAARTSWGVLRRAAGEIIAIPRRIRQGAELALL</sequence>
<evidence type="ECO:0000250" key="1"/>
<evidence type="ECO:0000255" key="2"/>
<evidence type="ECO:0000256" key="3">
    <source>
        <dbReference type="SAM" id="MobiDB-lite"/>
    </source>
</evidence>
<evidence type="ECO:0000305" key="4"/>
<organism>
    <name type="scientific">Human immunodeficiency virus type 2 subtype B (isolate EHO)</name>
    <name type="common">HIV-2</name>
    <dbReference type="NCBI Taxonomy" id="388821"/>
    <lineage>
        <taxon>Viruses</taxon>
        <taxon>Riboviria</taxon>
        <taxon>Pararnavirae</taxon>
        <taxon>Artverviricota</taxon>
        <taxon>Revtraviricetes</taxon>
        <taxon>Ortervirales</taxon>
        <taxon>Retroviridae</taxon>
        <taxon>Orthoretrovirinae</taxon>
        <taxon>Lentivirus</taxon>
        <taxon>Human immunodeficiency virus 2</taxon>
    </lineage>
</organism>
<proteinExistence type="inferred from homology"/>
<organismHost>
    <name type="scientific">Homo sapiens</name>
    <name type="common">Human</name>
    <dbReference type="NCBI Taxonomy" id="9606"/>
</organismHost>
<name>ENV_HV2EH</name>